<organism>
    <name type="scientific">Cupriavidus taiwanensis (strain DSM 17343 / BCRC 17206 / CCUG 44338 / CIP 107171 / LMG 19424 / R1)</name>
    <name type="common">Ralstonia taiwanensis (strain LMG 19424)</name>
    <dbReference type="NCBI Taxonomy" id="977880"/>
    <lineage>
        <taxon>Bacteria</taxon>
        <taxon>Pseudomonadati</taxon>
        <taxon>Pseudomonadota</taxon>
        <taxon>Betaproteobacteria</taxon>
        <taxon>Burkholderiales</taxon>
        <taxon>Burkholderiaceae</taxon>
        <taxon>Cupriavidus</taxon>
    </lineage>
</organism>
<comment type="function">
    <text evidence="1">Heme chaperone required for the biogenesis of c-type cytochromes. Transiently binds heme delivered by CcmC and transfers the heme to apo-cytochromes in a process facilitated by CcmF and CcmH.</text>
</comment>
<comment type="subcellular location">
    <subcellularLocation>
        <location evidence="1">Cell inner membrane</location>
        <topology evidence="1">Single-pass type II membrane protein</topology>
        <orientation evidence="1">Periplasmic side</orientation>
    </subcellularLocation>
</comment>
<comment type="similarity">
    <text evidence="1">Belongs to the CcmE/CycJ family.</text>
</comment>
<name>CCME_CUPTR</name>
<feature type="chain" id="PRO_1000189011" description="Cytochrome c-type biogenesis protein CcmE">
    <location>
        <begin position="1"/>
        <end position="157"/>
    </location>
</feature>
<feature type="topological domain" description="Cytoplasmic" evidence="1">
    <location>
        <begin position="1"/>
        <end position="7"/>
    </location>
</feature>
<feature type="transmembrane region" description="Helical; Signal-anchor for type II membrane protein" evidence="1">
    <location>
        <begin position="8"/>
        <end position="28"/>
    </location>
</feature>
<feature type="topological domain" description="Periplasmic" evidence="1">
    <location>
        <begin position="29"/>
        <end position="157"/>
    </location>
</feature>
<feature type="binding site" description="covalent" evidence="1">
    <location>
        <position position="123"/>
    </location>
    <ligand>
        <name>heme</name>
        <dbReference type="ChEBI" id="CHEBI:30413"/>
    </ligand>
</feature>
<feature type="binding site" description="axial binding residue" evidence="1">
    <location>
        <position position="127"/>
    </location>
    <ligand>
        <name>heme</name>
        <dbReference type="ChEBI" id="CHEBI:30413"/>
    </ligand>
    <ligandPart>
        <name>Fe</name>
        <dbReference type="ChEBI" id="CHEBI:18248"/>
    </ligandPart>
</feature>
<dbReference type="EMBL" id="CU633750">
    <property type="protein sequence ID" value="CAQ71263.1"/>
    <property type="molecule type" value="Genomic_DNA"/>
</dbReference>
<dbReference type="RefSeq" id="WP_012355486.1">
    <property type="nucleotide sequence ID" value="NC_010530.1"/>
</dbReference>
<dbReference type="SMR" id="B3R8Z5"/>
<dbReference type="GeneID" id="29764091"/>
<dbReference type="KEGG" id="cti:RALTA_B0644"/>
<dbReference type="eggNOG" id="COG2332">
    <property type="taxonomic scope" value="Bacteria"/>
</dbReference>
<dbReference type="HOGENOM" id="CLU_079503_1_1_4"/>
<dbReference type="BioCyc" id="CTAI977880:RALTA_RS18860-MONOMER"/>
<dbReference type="Proteomes" id="UP000001692">
    <property type="component" value="Chromosome 2"/>
</dbReference>
<dbReference type="GO" id="GO:0005886">
    <property type="term" value="C:plasma membrane"/>
    <property type="evidence" value="ECO:0007669"/>
    <property type="project" value="UniProtKB-SubCell"/>
</dbReference>
<dbReference type="GO" id="GO:0020037">
    <property type="term" value="F:heme binding"/>
    <property type="evidence" value="ECO:0007669"/>
    <property type="project" value="InterPro"/>
</dbReference>
<dbReference type="GO" id="GO:0046872">
    <property type="term" value="F:metal ion binding"/>
    <property type="evidence" value="ECO:0007669"/>
    <property type="project" value="UniProtKB-KW"/>
</dbReference>
<dbReference type="GO" id="GO:0017004">
    <property type="term" value="P:cytochrome complex assembly"/>
    <property type="evidence" value="ECO:0007669"/>
    <property type="project" value="UniProtKB-KW"/>
</dbReference>
<dbReference type="FunFam" id="2.40.50.140:FF:000104">
    <property type="entry name" value="Cytochrome c-type biogenesis protein CcmE"/>
    <property type="match status" value="1"/>
</dbReference>
<dbReference type="Gene3D" id="2.40.50.140">
    <property type="entry name" value="Nucleic acid-binding proteins"/>
    <property type="match status" value="1"/>
</dbReference>
<dbReference type="HAMAP" id="MF_01959">
    <property type="entry name" value="CcmE"/>
    <property type="match status" value="1"/>
</dbReference>
<dbReference type="InterPro" id="IPR004329">
    <property type="entry name" value="CcmE"/>
</dbReference>
<dbReference type="InterPro" id="IPR036127">
    <property type="entry name" value="CcmE-like_sf"/>
</dbReference>
<dbReference type="InterPro" id="IPR012340">
    <property type="entry name" value="NA-bd_OB-fold"/>
</dbReference>
<dbReference type="NCBIfam" id="NF009727">
    <property type="entry name" value="PRK13254.1-1"/>
    <property type="match status" value="1"/>
</dbReference>
<dbReference type="NCBIfam" id="NF009729">
    <property type="entry name" value="PRK13254.1-3"/>
    <property type="match status" value="1"/>
</dbReference>
<dbReference type="NCBIfam" id="NF009731">
    <property type="entry name" value="PRK13254.1-5"/>
    <property type="match status" value="1"/>
</dbReference>
<dbReference type="PANTHER" id="PTHR34128">
    <property type="entry name" value="CYTOCHROME C-TYPE BIOGENESIS PROTEIN CCME HOMOLOG, MITOCHONDRIAL"/>
    <property type="match status" value="1"/>
</dbReference>
<dbReference type="PANTHER" id="PTHR34128:SF2">
    <property type="entry name" value="CYTOCHROME C-TYPE BIOGENESIS PROTEIN CCME HOMOLOG, MITOCHONDRIAL"/>
    <property type="match status" value="1"/>
</dbReference>
<dbReference type="Pfam" id="PF03100">
    <property type="entry name" value="CcmE"/>
    <property type="match status" value="1"/>
</dbReference>
<dbReference type="SUPFAM" id="SSF82093">
    <property type="entry name" value="Heme chaperone CcmE"/>
    <property type="match status" value="1"/>
</dbReference>
<gene>
    <name evidence="1" type="primary">ccmE</name>
    <name evidence="1" type="synonym">cycJ</name>
    <name type="ordered locus">RALTA_B0644</name>
</gene>
<proteinExistence type="inferred from homology"/>
<protein>
    <recommendedName>
        <fullName evidence="1">Cytochrome c-type biogenesis protein CcmE</fullName>
    </recommendedName>
    <alternativeName>
        <fullName evidence="1">Cytochrome c maturation protein E</fullName>
    </alternativeName>
    <alternativeName>
        <fullName evidence="1">Heme chaperone CcmE</fullName>
    </alternativeName>
</protein>
<evidence type="ECO:0000255" key="1">
    <source>
        <dbReference type="HAMAP-Rule" id="MF_01959"/>
    </source>
</evidence>
<keyword id="KW-0997">Cell inner membrane</keyword>
<keyword id="KW-1003">Cell membrane</keyword>
<keyword id="KW-0201">Cytochrome c-type biogenesis</keyword>
<keyword id="KW-0349">Heme</keyword>
<keyword id="KW-0408">Iron</keyword>
<keyword id="KW-0472">Membrane</keyword>
<keyword id="KW-0479">Metal-binding</keyword>
<keyword id="KW-0735">Signal-anchor</keyword>
<keyword id="KW-0812">Transmembrane</keyword>
<keyword id="KW-1133">Transmembrane helix</keyword>
<sequence>MTPRQRRLGLLAAALACCGVAAALVLNAFRANLVFFFSPSQVAAQEAPVARSFRLGGLVASGSIRREGDGMTVRFVVTDTARQVPVQYRGLLPDLFREGKGVVARGQLRADGTFVATEVLAKHDENYMPPEAAAALKQAGQANPGMAGAMAAQELRR</sequence>
<accession>B3R8Z5</accession>
<reference key="1">
    <citation type="journal article" date="2008" name="Genome Res.">
        <title>Genome sequence of the beta-rhizobium Cupriavidus taiwanensis and comparative genomics of rhizobia.</title>
        <authorList>
            <person name="Amadou C."/>
            <person name="Pascal G."/>
            <person name="Mangenot S."/>
            <person name="Glew M."/>
            <person name="Bontemps C."/>
            <person name="Capela D."/>
            <person name="Carrere S."/>
            <person name="Cruveiller S."/>
            <person name="Dossat C."/>
            <person name="Lajus A."/>
            <person name="Marchetti M."/>
            <person name="Poinsot V."/>
            <person name="Rouy Z."/>
            <person name="Servin B."/>
            <person name="Saad M."/>
            <person name="Schenowitz C."/>
            <person name="Barbe V."/>
            <person name="Batut J."/>
            <person name="Medigue C."/>
            <person name="Masson-Boivin C."/>
        </authorList>
    </citation>
    <scope>NUCLEOTIDE SEQUENCE [LARGE SCALE GENOMIC DNA]</scope>
    <source>
        <strain>DSM 17343 / BCRC 17206 / CCUG 44338 / CIP 107171 / LMG 19424 / R1</strain>
    </source>
</reference>